<gene>
    <name evidence="1" type="primary">pth</name>
    <name type="ordered locus">BAD_0643</name>
</gene>
<feature type="chain" id="PRO_1000010565" description="Peptidyl-tRNA hydrolase">
    <location>
        <begin position="1"/>
        <end position="199"/>
    </location>
</feature>
<feature type="active site" description="Proton acceptor" evidence="1">
    <location>
        <position position="23"/>
    </location>
</feature>
<feature type="binding site" evidence="1">
    <location>
        <position position="18"/>
    </location>
    <ligand>
        <name>tRNA</name>
        <dbReference type="ChEBI" id="CHEBI:17843"/>
    </ligand>
</feature>
<feature type="binding site" evidence="1">
    <location>
        <position position="72"/>
    </location>
    <ligand>
        <name>tRNA</name>
        <dbReference type="ChEBI" id="CHEBI:17843"/>
    </ligand>
</feature>
<feature type="binding site" evidence="1">
    <location>
        <position position="74"/>
    </location>
    <ligand>
        <name>tRNA</name>
        <dbReference type="ChEBI" id="CHEBI:17843"/>
    </ligand>
</feature>
<feature type="binding site" evidence="1">
    <location>
        <position position="120"/>
    </location>
    <ligand>
        <name>tRNA</name>
        <dbReference type="ChEBI" id="CHEBI:17843"/>
    </ligand>
</feature>
<feature type="site" description="Discriminates between blocked and unblocked aminoacyl-tRNA" evidence="1">
    <location>
        <position position="13"/>
    </location>
</feature>
<feature type="site" description="Stabilizes the basic form of H active site to accept a proton" evidence="1">
    <location>
        <position position="99"/>
    </location>
</feature>
<accession>A1A141</accession>
<evidence type="ECO:0000255" key="1">
    <source>
        <dbReference type="HAMAP-Rule" id="MF_00083"/>
    </source>
</evidence>
<proteinExistence type="inferred from homology"/>
<comment type="function">
    <text evidence="1">Hydrolyzes ribosome-free peptidyl-tRNAs (with 1 or more amino acids incorporated), which drop off the ribosome during protein synthesis, or as a result of ribosome stalling.</text>
</comment>
<comment type="function">
    <text evidence="1">Catalyzes the release of premature peptidyl moieties from peptidyl-tRNA molecules trapped in stalled 50S ribosomal subunits, and thus maintains levels of free tRNAs and 50S ribosomes.</text>
</comment>
<comment type="catalytic activity">
    <reaction evidence="1">
        <text>an N-acyl-L-alpha-aminoacyl-tRNA + H2O = an N-acyl-L-amino acid + a tRNA + H(+)</text>
        <dbReference type="Rhea" id="RHEA:54448"/>
        <dbReference type="Rhea" id="RHEA-COMP:10123"/>
        <dbReference type="Rhea" id="RHEA-COMP:13883"/>
        <dbReference type="ChEBI" id="CHEBI:15377"/>
        <dbReference type="ChEBI" id="CHEBI:15378"/>
        <dbReference type="ChEBI" id="CHEBI:59874"/>
        <dbReference type="ChEBI" id="CHEBI:78442"/>
        <dbReference type="ChEBI" id="CHEBI:138191"/>
        <dbReference type="EC" id="3.1.1.29"/>
    </reaction>
</comment>
<comment type="subunit">
    <text evidence="1">Monomer.</text>
</comment>
<comment type="subcellular location">
    <subcellularLocation>
        <location evidence="1">Cytoplasm</location>
    </subcellularLocation>
</comment>
<comment type="similarity">
    <text evidence="1">Belongs to the PTH family.</text>
</comment>
<dbReference type="EC" id="3.1.1.29" evidence="1"/>
<dbReference type="EMBL" id="AP009256">
    <property type="protein sequence ID" value="BAF39424.1"/>
    <property type="molecule type" value="Genomic_DNA"/>
</dbReference>
<dbReference type="RefSeq" id="WP_011743073.1">
    <property type="nucleotide sequence ID" value="NZ_CAXVNC010000001.1"/>
</dbReference>
<dbReference type="SMR" id="A1A141"/>
<dbReference type="STRING" id="367928.BAD_0643"/>
<dbReference type="PaxDb" id="1680-BADO_0687"/>
<dbReference type="GeneID" id="4556682"/>
<dbReference type="KEGG" id="bad:BAD_0643"/>
<dbReference type="HOGENOM" id="CLU_062456_3_1_11"/>
<dbReference type="Proteomes" id="UP000008702">
    <property type="component" value="Chromosome"/>
</dbReference>
<dbReference type="GO" id="GO:0005737">
    <property type="term" value="C:cytoplasm"/>
    <property type="evidence" value="ECO:0007669"/>
    <property type="project" value="UniProtKB-SubCell"/>
</dbReference>
<dbReference type="GO" id="GO:0004045">
    <property type="term" value="F:peptidyl-tRNA hydrolase activity"/>
    <property type="evidence" value="ECO:0007669"/>
    <property type="project" value="UniProtKB-UniRule"/>
</dbReference>
<dbReference type="GO" id="GO:0000049">
    <property type="term" value="F:tRNA binding"/>
    <property type="evidence" value="ECO:0007669"/>
    <property type="project" value="UniProtKB-UniRule"/>
</dbReference>
<dbReference type="GO" id="GO:0006515">
    <property type="term" value="P:protein quality control for misfolded or incompletely synthesized proteins"/>
    <property type="evidence" value="ECO:0007669"/>
    <property type="project" value="UniProtKB-UniRule"/>
</dbReference>
<dbReference type="GO" id="GO:0072344">
    <property type="term" value="P:rescue of stalled ribosome"/>
    <property type="evidence" value="ECO:0007669"/>
    <property type="project" value="UniProtKB-UniRule"/>
</dbReference>
<dbReference type="CDD" id="cd00462">
    <property type="entry name" value="PTH"/>
    <property type="match status" value="1"/>
</dbReference>
<dbReference type="FunFam" id="3.40.50.1470:FF:000001">
    <property type="entry name" value="Peptidyl-tRNA hydrolase"/>
    <property type="match status" value="1"/>
</dbReference>
<dbReference type="Gene3D" id="3.40.50.1470">
    <property type="entry name" value="Peptidyl-tRNA hydrolase"/>
    <property type="match status" value="1"/>
</dbReference>
<dbReference type="HAMAP" id="MF_00083">
    <property type="entry name" value="Pept_tRNA_hydro_bact"/>
    <property type="match status" value="1"/>
</dbReference>
<dbReference type="InterPro" id="IPR001328">
    <property type="entry name" value="Pept_tRNA_hydro"/>
</dbReference>
<dbReference type="InterPro" id="IPR018171">
    <property type="entry name" value="Pept_tRNA_hydro_CS"/>
</dbReference>
<dbReference type="InterPro" id="IPR036416">
    <property type="entry name" value="Pept_tRNA_hydro_sf"/>
</dbReference>
<dbReference type="NCBIfam" id="TIGR00447">
    <property type="entry name" value="pth"/>
    <property type="match status" value="1"/>
</dbReference>
<dbReference type="PANTHER" id="PTHR17224">
    <property type="entry name" value="PEPTIDYL-TRNA HYDROLASE"/>
    <property type="match status" value="1"/>
</dbReference>
<dbReference type="PANTHER" id="PTHR17224:SF1">
    <property type="entry name" value="PEPTIDYL-TRNA HYDROLASE"/>
    <property type="match status" value="1"/>
</dbReference>
<dbReference type="Pfam" id="PF01195">
    <property type="entry name" value="Pept_tRNA_hydro"/>
    <property type="match status" value="1"/>
</dbReference>
<dbReference type="SUPFAM" id="SSF53178">
    <property type="entry name" value="Peptidyl-tRNA hydrolase-like"/>
    <property type="match status" value="1"/>
</dbReference>
<dbReference type="PROSITE" id="PS01195">
    <property type="entry name" value="PEPT_TRNA_HYDROL_1"/>
    <property type="match status" value="1"/>
</dbReference>
<dbReference type="PROSITE" id="PS01196">
    <property type="entry name" value="PEPT_TRNA_HYDROL_2"/>
    <property type="match status" value="1"/>
</dbReference>
<keyword id="KW-0963">Cytoplasm</keyword>
<keyword id="KW-0378">Hydrolase</keyword>
<keyword id="KW-1185">Reference proteome</keyword>
<keyword id="KW-0694">RNA-binding</keyword>
<keyword id="KW-0820">tRNA-binding</keyword>
<organism>
    <name type="scientific">Bifidobacterium adolescentis (strain ATCC 15703 / DSM 20083 / NCTC 11814 / E194a)</name>
    <dbReference type="NCBI Taxonomy" id="367928"/>
    <lineage>
        <taxon>Bacteria</taxon>
        <taxon>Bacillati</taxon>
        <taxon>Actinomycetota</taxon>
        <taxon>Actinomycetes</taxon>
        <taxon>Bifidobacteriales</taxon>
        <taxon>Bifidobacteriaceae</taxon>
        <taxon>Bifidobacterium</taxon>
    </lineage>
</organism>
<sequence>MASDFWLIAGLGNPGSKYEGTRHNMGFMTADVLAERWSVNFSDHKGLAMLGKGVMNLSGRNVKFFLAKPLTYMNESGNAVASISAYYQIEPDHIVVIHDDMDLDFGRIKVKAGGSAGGHNGIKSIDRSLGTPKYARVRMGVGHAQRGAHAHDNTVNWVLGGFGPDQRKQLPEFLADGADAAETIIFDGLAKAQERFNGR</sequence>
<reference key="1">
    <citation type="submission" date="2006-12" db="EMBL/GenBank/DDBJ databases">
        <title>Bifidobacterium adolescentis complete genome sequence.</title>
        <authorList>
            <person name="Suzuki T."/>
            <person name="Tsuda Y."/>
            <person name="Kanou N."/>
            <person name="Inoue T."/>
            <person name="Kumazaki K."/>
            <person name="Nagano S."/>
            <person name="Hirai S."/>
            <person name="Tanaka K."/>
            <person name="Watanabe K."/>
        </authorList>
    </citation>
    <scope>NUCLEOTIDE SEQUENCE [LARGE SCALE GENOMIC DNA]</scope>
    <source>
        <strain>ATCC 15703 / DSM 20083 / NCTC 11814 / E194a</strain>
    </source>
</reference>
<name>PTH_BIFAA</name>
<protein>
    <recommendedName>
        <fullName evidence="1">Peptidyl-tRNA hydrolase</fullName>
        <shortName evidence="1">Pth</shortName>
        <ecNumber evidence="1">3.1.1.29</ecNumber>
    </recommendedName>
</protein>